<sequence>MDAVSMYKYQREAWKRPKDSYVGELLKERLPKWRKGPSVQRIKRPTRIERARRLGYRAKPGYVVVRVRVPKGGRRKSRPKKGRRPKRMGKNKFSPGKSKQWIAEERAQRKYPNLEVLNSYWVGEDGQYKYYEVIMVDPYHPQIKSDHRINWICQKSQKGRVFRGKTGAGKKARGLRKRGKGAEKVRPSLRAHRRRGK</sequence>
<comment type="similarity">
    <text evidence="1">Belongs to the eukaryotic ribosomal protein eL15 family.</text>
</comment>
<accession>Q8TYB3</accession>
<feature type="chain" id="PRO_0000127574" description="Large ribosomal subunit protein eL15">
    <location>
        <begin position="1"/>
        <end position="197"/>
    </location>
</feature>
<feature type="region of interest" description="Disordered" evidence="2">
    <location>
        <begin position="70"/>
        <end position="99"/>
    </location>
</feature>
<feature type="region of interest" description="Disordered" evidence="2">
    <location>
        <begin position="163"/>
        <end position="197"/>
    </location>
</feature>
<feature type="compositionally biased region" description="Basic residues" evidence="2">
    <location>
        <begin position="70"/>
        <end position="90"/>
    </location>
</feature>
<feature type="compositionally biased region" description="Basic residues" evidence="2">
    <location>
        <begin position="163"/>
        <end position="179"/>
    </location>
</feature>
<feature type="compositionally biased region" description="Basic residues" evidence="2">
    <location>
        <begin position="187"/>
        <end position="197"/>
    </location>
</feature>
<name>RL15E_METKA</name>
<reference key="1">
    <citation type="journal article" date="2002" name="Proc. Natl. Acad. Sci. U.S.A.">
        <title>The complete genome of hyperthermophile Methanopyrus kandleri AV19 and monophyly of archaeal methanogens.</title>
        <authorList>
            <person name="Slesarev A.I."/>
            <person name="Mezhevaya K.V."/>
            <person name="Makarova K.S."/>
            <person name="Polushin N.N."/>
            <person name="Shcherbinina O.V."/>
            <person name="Shakhova V.V."/>
            <person name="Belova G.I."/>
            <person name="Aravind L."/>
            <person name="Natale D.A."/>
            <person name="Rogozin I.B."/>
            <person name="Tatusov R.L."/>
            <person name="Wolf Y.I."/>
            <person name="Stetter K.O."/>
            <person name="Malykh A.G."/>
            <person name="Koonin E.V."/>
            <person name="Kozyavkin S.A."/>
        </authorList>
    </citation>
    <scope>NUCLEOTIDE SEQUENCE [LARGE SCALE GENOMIC DNA]</scope>
    <source>
        <strain>AV19 / DSM 6324 / JCM 9639 / NBRC 100938</strain>
    </source>
</reference>
<proteinExistence type="inferred from homology"/>
<evidence type="ECO:0000255" key="1">
    <source>
        <dbReference type="HAMAP-Rule" id="MF_00256"/>
    </source>
</evidence>
<evidence type="ECO:0000256" key="2">
    <source>
        <dbReference type="SAM" id="MobiDB-lite"/>
    </source>
</evidence>
<evidence type="ECO:0000305" key="3"/>
<dbReference type="EMBL" id="AE009439">
    <property type="protein sequence ID" value="AAM01604.1"/>
    <property type="molecule type" value="Genomic_DNA"/>
</dbReference>
<dbReference type="SMR" id="Q8TYB3"/>
<dbReference type="FunCoup" id="Q8TYB3">
    <property type="interactions" value="157"/>
</dbReference>
<dbReference type="STRING" id="190192.MK0389"/>
<dbReference type="PaxDb" id="190192-MK0389"/>
<dbReference type="EnsemblBacteria" id="AAM01604">
    <property type="protein sequence ID" value="AAM01604"/>
    <property type="gene ID" value="MK0389"/>
</dbReference>
<dbReference type="KEGG" id="mka:MK0389"/>
<dbReference type="PATRIC" id="fig|190192.8.peg.415"/>
<dbReference type="HOGENOM" id="CLU_080796_1_0_2"/>
<dbReference type="InParanoid" id="Q8TYB3"/>
<dbReference type="Proteomes" id="UP000001826">
    <property type="component" value="Chromosome"/>
</dbReference>
<dbReference type="GO" id="GO:0022625">
    <property type="term" value="C:cytosolic large ribosomal subunit"/>
    <property type="evidence" value="ECO:0007669"/>
    <property type="project" value="TreeGrafter"/>
</dbReference>
<dbReference type="GO" id="GO:0003723">
    <property type="term" value="F:RNA binding"/>
    <property type="evidence" value="ECO:0007669"/>
    <property type="project" value="TreeGrafter"/>
</dbReference>
<dbReference type="GO" id="GO:0003735">
    <property type="term" value="F:structural constituent of ribosome"/>
    <property type="evidence" value="ECO:0007669"/>
    <property type="project" value="InterPro"/>
</dbReference>
<dbReference type="GO" id="GO:0002181">
    <property type="term" value="P:cytoplasmic translation"/>
    <property type="evidence" value="ECO:0007669"/>
    <property type="project" value="TreeGrafter"/>
</dbReference>
<dbReference type="FunFam" id="3.40.1120.10:FF:000002">
    <property type="entry name" value="50S ribosomal protein L15e"/>
    <property type="match status" value="1"/>
</dbReference>
<dbReference type="Gene3D" id="3.40.1120.10">
    <property type="entry name" value="Ribosomal protein l15e"/>
    <property type="match status" value="1"/>
</dbReference>
<dbReference type="HAMAP" id="MF_00256">
    <property type="entry name" value="Ribosomal_eL15"/>
    <property type="match status" value="1"/>
</dbReference>
<dbReference type="InterPro" id="IPR024794">
    <property type="entry name" value="Rbsml_eL15_core_dom_sf"/>
</dbReference>
<dbReference type="InterPro" id="IPR000439">
    <property type="entry name" value="Ribosomal_eL15"/>
</dbReference>
<dbReference type="InterPro" id="IPR020926">
    <property type="entry name" value="Ribosomal_eL15_arc"/>
</dbReference>
<dbReference type="InterPro" id="IPR020925">
    <property type="entry name" value="Ribosomal_eL15_CS"/>
</dbReference>
<dbReference type="InterPro" id="IPR012678">
    <property type="entry name" value="Ribosomal_uL23/eL15/eS24_sf"/>
</dbReference>
<dbReference type="NCBIfam" id="NF003269">
    <property type="entry name" value="PRK04243.1"/>
    <property type="match status" value="1"/>
</dbReference>
<dbReference type="PANTHER" id="PTHR11847:SF4">
    <property type="entry name" value="LARGE RIBOSOMAL SUBUNIT PROTEIN EL15"/>
    <property type="match status" value="1"/>
</dbReference>
<dbReference type="PANTHER" id="PTHR11847">
    <property type="entry name" value="RIBOSOMAL PROTEIN L15"/>
    <property type="match status" value="1"/>
</dbReference>
<dbReference type="Pfam" id="PF00827">
    <property type="entry name" value="Ribosomal_L15e"/>
    <property type="match status" value="1"/>
</dbReference>
<dbReference type="SMART" id="SM01384">
    <property type="entry name" value="Ribosomal_L15e"/>
    <property type="match status" value="1"/>
</dbReference>
<dbReference type="SUPFAM" id="SSF54189">
    <property type="entry name" value="Ribosomal proteins S24e, L23 and L15e"/>
    <property type="match status" value="1"/>
</dbReference>
<dbReference type="PROSITE" id="PS01194">
    <property type="entry name" value="RIBOSOMAL_L15E"/>
    <property type="match status" value="1"/>
</dbReference>
<keyword id="KW-1185">Reference proteome</keyword>
<keyword id="KW-0687">Ribonucleoprotein</keyword>
<keyword id="KW-0689">Ribosomal protein</keyword>
<organism>
    <name type="scientific">Methanopyrus kandleri (strain AV19 / DSM 6324 / JCM 9639 / NBRC 100938)</name>
    <dbReference type="NCBI Taxonomy" id="190192"/>
    <lineage>
        <taxon>Archaea</taxon>
        <taxon>Methanobacteriati</taxon>
        <taxon>Methanobacteriota</taxon>
        <taxon>Methanomada group</taxon>
        <taxon>Methanopyri</taxon>
        <taxon>Methanopyrales</taxon>
        <taxon>Methanopyraceae</taxon>
        <taxon>Methanopyrus</taxon>
    </lineage>
</organism>
<gene>
    <name evidence="1" type="primary">rpl15e</name>
    <name type="ordered locus">MK0389</name>
</gene>
<protein>
    <recommendedName>
        <fullName evidence="1">Large ribosomal subunit protein eL15</fullName>
    </recommendedName>
    <alternativeName>
        <fullName evidence="3">50S ribosomal protein L15e</fullName>
    </alternativeName>
</protein>